<reference key="1">
    <citation type="journal article" date="1998" name="Gene">
        <title>Cloning and expression of Staphylococcus aureus and Streptococcus pyogenes murD genes encoding uridine diphosphate N-acetylmuramoyl-L-alanine:D-glutamate ligases.</title>
        <authorList>
            <person name="El-Sherbeini M."/>
            <person name="Geissler W.M."/>
            <person name="Pittman J."/>
            <person name="Yuan X."/>
            <person name="Wong K.K."/>
            <person name="Pompliano D.L."/>
        </authorList>
    </citation>
    <scope>NUCLEOTIDE SEQUENCE [GENOMIC DNA]</scope>
    <source>
        <strain>R27</strain>
    </source>
</reference>
<reference key="2">
    <citation type="submission" date="1997-03" db="EMBL/GenBank/DDBJ databases">
        <authorList>
            <person name="Pucci M.J."/>
            <person name="Thanassi J.A."/>
            <person name="Discotto L.F."/>
            <person name="Kessler R.E."/>
            <person name="Dougherty T.J."/>
        </authorList>
    </citation>
    <scope>NUCLEOTIDE SEQUENCE [GENOMIC DNA]</scope>
    <source>
        <strain>ATCC 8325-4</strain>
    </source>
</reference>
<gene>
    <name type="primary">murD</name>
</gene>
<comment type="function">
    <text evidence="1">Cell wall formation. Catalyzes the addition of glutamate to the nucleotide precursor UDP-N-acetylmuramoyl-L-alanine (UMA).</text>
</comment>
<comment type="catalytic activity">
    <reaction>
        <text>UDP-N-acetyl-alpha-D-muramoyl-L-alanine + D-glutamate + ATP = UDP-N-acetyl-alpha-D-muramoyl-L-alanyl-D-glutamate + ADP + phosphate + H(+)</text>
        <dbReference type="Rhea" id="RHEA:16429"/>
        <dbReference type="ChEBI" id="CHEBI:15378"/>
        <dbReference type="ChEBI" id="CHEBI:29986"/>
        <dbReference type="ChEBI" id="CHEBI:30616"/>
        <dbReference type="ChEBI" id="CHEBI:43474"/>
        <dbReference type="ChEBI" id="CHEBI:83898"/>
        <dbReference type="ChEBI" id="CHEBI:83900"/>
        <dbReference type="ChEBI" id="CHEBI:456216"/>
        <dbReference type="EC" id="6.3.2.9"/>
    </reaction>
</comment>
<comment type="pathway">
    <text>Cell wall biogenesis; peptidoglycan biosynthesis.</text>
</comment>
<comment type="subcellular location">
    <subcellularLocation>
        <location evidence="1">Cytoplasm</location>
    </subcellularLocation>
</comment>
<comment type="similarity">
    <text evidence="3">Belongs to the MurCDEF family.</text>
</comment>
<accession>P0A091</accession>
<accession>O07323</accession>
<accession>O33595</accession>
<protein>
    <recommendedName>
        <fullName>UDP-N-acetylmuramoylalanine--D-glutamate ligase</fullName>
        <ecNumber>6.3.2.9</ecNumber>
    </recommendedName>
    <alternativeName>
        <fullName>D-glutamic acid-adding enzyme</fullName>
    </alternativeName>
    <alternativeName>
        <fullName>UDP-N-acetylmuramoyl-L-alanyl-D-glutamate synthetase</fullName>
    </alternativeName>
</protein>
<feature type="chain" id="PRO_0000109083" description="UDP-N-acetylmuramoylalanine--D-glutamate ligase">
    <location>
        <begin position="1"/>
        <end position="449"/>
    </location>
</feature>
<feature type="binding site" evidence="2">
    <location>
        <begin position="118"/>
        <end position="124"/>
    </location>
    <ligand>
        <name>ATP</name>
        <dbReference type="ChEBI" id="CHEBI:30616"/>
    </ligand>
</feature>
<feature type="sequence conflict" description="In Ref. 2; AAC45626." evidence="3" ref="2">
    <original>RAMVVFGQTKAKFAKL</original>
    <variation>SREWLYSDSRKLSLLNY</variation>
    <location>
        <begin position="370"/>
        <end position="385"/>
    </location>
</feature>
<organism>
    <name type="scientific">Staphylococcus aureus</name>
    <dbReference type="NCBI Taxonomy" id="1280"/>
    <lineage>
        <taxon>Bacteria</taxon>
        <taxon>Bacillati</taxon>
        <taxon>Bacillota</taxon>
        <taxon>Bacilli</taxon>
        <taxon>Bacillales</taxon>
        <taxon>Staphylococcaceae</taxon>
        <taxon>Staphylococcus</taxon>
    </lineage>
</organism>
<evidence type="ECO:0000250" key="1"/>
<evidence type="ECO:0000255" key="2"/>
<evidence type="ECO:0000305" key="3"/>
<keyword id="KW-0067">ATP-binding</keyword>
<keyword id="KW-0131">Cell cycle</keyword>
<keyword id="KW-0132">Cell division</keyword>
<keyword id="KW-0133">Cell shape</keyword>
<keyword id="KW-0961">Cell wall biogenesis/degradation</keyword>
<keyword id="KW-0963">Cytoplasm</keyword>
<keyword id="KW-0436">Ligase</keyword>
<keyword id="KW-0547">Nucleotide-binding</keyword>
<keyword id="KW-0573">Peptidoglycan synthesis</keyword>
<proteinExistence type="inferred from homology"/>
<name>MURD_STAAU</name>
<dbReference type="EC" id="6.3.2.9"/>
<dbReference type="EMBL" id="AF009671">
    <property type="protein sequence ID" value="AAC46291.1"/>
    <property type="molecule type" value="Genomic_DNA"/>
</dbReference>
<dbReference type="EMBL" id="U94706">
    <property type="protein sequence ID" value="AAC45626.1"/>
    <property type="molecule type" value="Genomic_DNA"/>
</dbReference>
<dbReference type="PIR" id="JC6560">
    <property type="entry name" value="JC6560"/>
</dbReference>
<dbReference type="RefSeq" id="WP_000935991.1">
    <property type="nucleotide sequence ID" value="NZ_WYDB01000002.1"/>
</dbReference>
<dbReference type="SMR" id="P0A091"/>
<dbReference type="BindingDB" id="P0A091"/>
<dbReference type="ChEMBL" id="CHEMBL4841"/>
<dbReference type="OMA" id="CSSFDMF"/>
<dbReference type="BioCyc" id="MetaCyc:MONOMER-12256"/>
<dbReference type="BRENDA" id="6.3.2.9">
    <property type="organism ID" value="3352"/>
</dbReference>
<dbReference type="SABIO-RK" id="P0A091"/>
<dbReference type="UniPathway" id="UPA00219"/>
<dbReference type="PRO" id="PR:P0A091"/>
<dbReference type="GO" id="GO:0005737">
    <property type="term" value="C:cytoplasm"/>
    <property type="evidence" value="ECO:0007669"/>
    <property type="project" value="UniProtKB-SubCell"/>
</dbReference>
<dbReference type="GO" id="GO:0005524">
    <property type="term" value="F:ATP binding"/>
    <property type="evidence" value="ECO:0007669"/>
    <property type="project" value="UniProtKB-UniRule"/>
</dbReference>
<dbReference type="GO" id="GO:0008764">
    <property type="term" value="F:UDP-N-acetylmuramoylalanine-D-glutamate ligase activity"/>
    <property type="evidence" value="ECO:0007669"/>
    <property type="project" value="UniProtKB-UniRule"/>
</dbReference>
<dbReference type="GO" id="GO:0051301">
    <property type="term" value="P:cell division"/>
    <property type="evidence" value="ECO:0007669"/>
    <property type="project" value="UniProtKB-KW"/>
</dbReference>
<dbReference type="GO" id="GO:0071555">
    <property type="term" value="P:cell wall organization"/>
    <property type="evidence" value="ECO:0007669"/>
    <property type="project" value="UniProtKB-KW"/>
</dbReference>
<dbReference type="GO" id="GO:0009252">
    <property type="term" value="P:peptidoglycan biosynthetic process"/>
    <property type="evidence" value="ECO:0007669"/>
    <property type="project" value="UniProtKB-UniRule"/>
</dbReference>
<dbReference type="GO" id="GO:0008360">
    <property type="term" value="P:regulation of cell shape"/>
    <property type="evidence" value="ECO:0007669"/>
    <property type="project" value="UniProtKB-KW"/>
</dbReference>
<dbReference type="Gene3D" id="3.90.190.20">
    <property type="entry name" value="Mur ligase, C-terminal domain"/>
    <property type="match status" value="1"/>
</dbReference>
<dbReference type="Gene3D" id="3.40.1190.10">
    <property type="entry name" value="Mur-like, catalytic domain"/>
    <property type="match status" value="1"/>
</dbReference>
<dbReference type="Gene3D" id="3.40.50.720">
    <property type="entry name" value="NAD(P)-binding Rossmann-like Domain"/>
    <property type="match status" value="1"/>
</dbReference>
<dbReference type="HAMAP" id="MF_00639">
    <property type="entry name" value="MurD"/>
    <property type="match status" value="1"/>
</dbReference>
<dbReference type="InterPro" id="IPR036565">
    <property type="entry name" value="Mur-like_cat_sf"/>
</dbReference>
<dbReference type="InterPro" id="IPR004101">
    <property type="entry name" value="Mur_ligase_C"/>
</dbReference>
<dbReference type="InterPro" id="IPR036615">
    <property type="entry name" value="Mur_ligase_C_dom_sf"/>
</dbReference>
<dbReference type="InterPro" id="IPR013221">
    <property type="entry name" value="Mur_ligase_cen"/>
</dbReference>
<dbReference type="InterPro" id="IPR005762">
    <property type="entry name" value="MurD"/>
</dbReference>
<dbReference type="NCBIfam" id="TIGR01087">
    <property type="entry name" value="murD"/>
    <property type="match status" value="1"/>
</dbReference>
<dbReference type="PANTHER" id="PTHR43692">
    <property type="entry name" value="UDP-N-ACETYLMURAMOYLALANINE--D-GLUTAMATE LIGASE"/>
    <property type="match status" value="1"/>
</dbReference>
<dbReference type="PANTHER" id="PTHR43692:SF1">
    <property type="entry name" value="UDP-N-ACETYLMURAMOYLALANINE--D-GLUTAMATE LIGASE"/>
    <property type="match status" value="1"/>
</dbReference>
<dbReference type="Pfam" id="PF02875">
    <property type="entry name" value="Mur_ligase_C"/>
    <property type="match status" value="1"/>
</dbReference>
<dbReference type="Pfam" id="PF08245">
    <property type="entry name" value="Mur_ligase_M"/>
    <property type="match status" value="1"/>
</dbReference>
<dbReference type="Pfam" id="PF21799">
    <property type="entry name" value="MurD-like_N"/>
    <property type="match status" value="1"/>
</dbReference>
<dbReference type="SUPFAM" id="SSF51984">
    <property type="entry name" value="MurCD N-terminal domain"/>
    <property type="match status" value="1"/>
</dbReference>
<dbReference type="SUPFAM" id="SSF53623">
    <property type="entry name" value="MurD-like peptide ligases, catalytic domain"/>
    <property type="match status" value="1"/>
</dbReference>
<dbReference type="SUPFAM" id="SSF53244">
    <property type="entry name" value="MurD-like peptide ligases, peptide-binding domain"/>
    <property type="match status" value="1"/>
</dbReference>
<sequence>MLNYTGLENKNVLVVGLAKSGYEAAKLLSKLGANVTVNDGKDLSQDAHAKDLESMGISVVSGSHPLTLLDNNPIIVKNPGIPYTVSIIDEAVKRGLKILTEVELSYLISEAPIIAVTGTNGKTTVTSLIGDMFKKSRLTGRLSGNIGYVASKVAQEVKPTDYLVTELSSFQLLGIEKYKPHIAIITNIYSAHLDYHENLENYQNAKKQIYKNQTEEDYLICNYHQRQVIESEELKAKTLYFSTQQEVDGIYIKDGFIVYKGVRIINTEDLVLPGEHNLENILAAVLACILAGVPIKAIIDSLTTFSGIEHRLQYVGTNRTNKYYNDSKATNTLATQFALNSFNQPIIWLCGGLDRGNEFDELIPYMENVRAMVVFGQTKAKFAKLGNSQGKSVIEANNVEDAVDKVQDIIEPNDVVLLSPACASWDQYSTFEERGEKFIERFRAHLPSY</sequence>